<name>LIPB_BUCAI</name>
<organism>
    <name type="scientific">Buchnera aphidicola subsp. Acyrthosiphon pisum (strain APS)</name>
    <name type="common">Acyrthosiphon pisum symbiotic bacterium</name>
    <dbReference type="NCBI Taxonomy" id="107806"/>
    <lineage>
        <taxon>Bacteria</taxon>
        <taxon>Pseudomonadati</taxon>
        <taxon>Pseudomonadota</taxon>
        <taxon>Gammaproteobacteria</taxon>
        <taxon>Enterobacterales</taxon>
        <taxon>Erwiniaceae</taxon>
        <taxon>Buchnera</taxon>
    </lineage>
</organism>
<comment type="function">
    <text evidence="1">Catalyzes the transfer of endogenously produced octanoic acid from octanoyl-acyl-carrier-protein onto the lipoyl domains of lipoate-dependent enzymes. Lipoyl-ACP can also act as a substrate although octanoyl-ACP is likely to be the physiological substrate.</text>
</comment>
<comment type="catalytic activity">
    <reaction evidence="1">
        <text>octanoyl-[ACP] + L-lysyl-[protein] = N(6)-octanoyl-L-lysyl-[protein] + holo-[ACP] + H(+)</text>
        <dbReference type="Rhea" id="RHEA:17665"/>
        <dbReference type="Rhea" id="RHEA-COMP:9636"/>
        <dbReference type="Rhea" id="RHEA-COMP:9685"/>
        <dbReference type="Rhea" id="RHEA-COMP:9752"/>
        <dbReference type="Rhea" id="RHEA-COMP:9928"/>
        <dbReference type="ChEBI" id="CHEBI:15378"/>
        <dbReference type="ChEBI" id="CHEBI:29969"/>
        <dbReference type="ChEBI" id="CHEBI:64479"/>
        <dbReference type="ChEBI" id="CHEBI:78463"/>
        <dbReference type="ChEBI" id="CHEBI:78809"/>
        <dbReference type="EC" id="2.3.1.181"/>
    </reaction>
</comment>
<comment type="pathway">
    <text evidence="1">Protein modification; protein lipoylation via endogenous pathway; protein N(6)-(lipoyl)lysine from octanoyl-[acyl-carrier-protein]: step 1/2.</text>
</comment>
<comment type="subcellular location">
    <subcellularLocation>
        <location evidence="1">Cytoplasm</location>
    </subcellularLocation>
</comment>
<comment type="miscellaneous">
    <text evidence="1">In the reaction, the free carboxyl group of octanoic acid is attached via an amide linkage to the epsilon-amino group of a specific lysine residue of lipoyl domains of lipoate-dependent enzymes.</text>
</comment>
<comment type="similarity">
    <text evidence="1">Belongs to the LipB family.</text>
</comment>
<accession>P57356</accession>
<evidence type="ECO:0000255" key="1">
    <source>
        <dbReference type="HAMAP-Rule" id="MF_00013"/>
    </source>
</evidence>
<evidence type="ECO:0000255" key="2">
    <source>
        <dbReference type="PROSITE-ProRule" id="PRU01067"/>
    </source>
</evidence>
<gene>
    <name evidence="1" type="primary">lipB</name>
    <name type="ordered locus">BU268</name>
</gene>
<keyword id="KW-0012">Acyltransferase</keyword>
<keyword id="KW-0963">Cytoplasm</keyword>
<keyword id="KW-1185">Reference proteome</keyword>
<keyword id="KW-0808">Transferase</keyword>
<sequence>MKKKIIFLRNLGIEHWLTTFNKMNNFIISRNPCTYDEIWFVEHYPIFTQGQSNEQKNLIVSNDIPVVQTNRGGQITYHGPGQQILYFLIDLKRRKMNIRQLINIMEQTVIETLNNFSIQAYTKKKMPGVYINEKKICSLGLRIKKGFTLHGLALNVNMNLTPFNYIHPCGDKNMKMTQIKDFNSNVKLKDVRFILIKELSKFLEIFIINSN</sequence>
<protein>
    <recommendedName>
        <fullName evidence="1">Octanoyltransferase</fullName>
        <ecNumber evidence="1">2.3.1.181</ecNumber>
    </recommendedName>
    <alternativeName>
        <fullName evidence="1">Lipoate-protein ligase B</fullName>
    </alternativeName>
    <alternativeName>
        <fullName evidence="1">Lipoyl/octanoyl transferase</fullName>
    </alternativeName>
    <alternativeName>
        <fullName evidence="1">Octanoyl-[acyl-carrier-protein]-protein N-octanoyltransferase</fullName>
    </alternativeName>
</protein>
<reference key="1">
    <citation type="journal article" date="2000" name="Nature">
        <title>Genome sequence of the endocellular bacterial symbiont of aphids Buchnera sp. APS.</title>
        <authorList>
            <person name="Shigenobu S."/>
            <person name="Watanabe H."/>
            <person name="Hattori M."/>
            <person name="Sakaki Y."/>
            <person name="Ishikawa H."/>
        </authorList>
    </citation>
    <scope>NUCLEOTIDE SEQUENCE [LARGE SCALE GENOMIC DNA]</scope>
    <source>
        <strain>APS</strain>
    </source>
</reference>
<dbReference type="EC" id="2.3.1.181" evidence="1"/>
<dbReference type="EMBL" id="BA000003">
    <property type="protein sequence ID" value="BAB12978.1"/>
    <property type="molecule type" value="Genomic_DNA"/>
</dbReference>
<dbReference type="RefSeq" id="NP_240092.1">
    <property type="nucleotide sequence ID" value="NC_002528.1"/>
</dbReference>
<dbReference type="RefSeq" id="WP_009874222.1">
    <property type="nucleotide sequence ID" value="NZ_AP036055.1"/>
</dbReference>
<dbReference type="SMR" id="P57356"/>
<dbReference type="STRING" id="563178.BUAP5A_263"/>
<dbReference type="EnsemblBacteria" id="BAB12978">
    <property type="protein sequence ID" value="BAB12978"/>
    <property type="gene ID" value="BAB12978"/>
</dbReference>
<dbReference type="KEGG" id="buc:BU268"/>
<dbReference type="PATRIC" id="fig|107806.10.peg.278"/>
<dbReference type="eggNOG" id="COG0321">
    <property type="taxonomic scope" value="Bacteria"/>
</dbReference>
<dbReference type="HOGENOM" id="CLU_035168_3_1_6"/>
<dbReference type="UniPathway" id="UPA00538">
    <property type="reaction ID" value="UER00592"/>
</dbReference>
<dbReference type="Proteomes" id="UP000001806">
    <property type="component" value="Chromosome"/>
</dbReference>
<dbReference type="GO" id="GO:0005737">
    <property type="term" value="C:cytoplasm"/>
    <property type="evidence" value="ECO:0007669"/>
    <property type="project" value="UniProtKB-SubCell"/>
</dbReference>
<dbReference type="GO" id="GO:0033819">
    <property type="term" value="F:lipoyl(octanoyl) transferase activity"/>
    <property type="evidence" value="ECO:0007669"/>
    <property type="project" value="UniProtKB-EC"/>
</dbReference>
<dbReference type="GO" id="GO:0036211">
    <property type="term" value="P:protein modification process"/>
    <property type="evidence" value="ECO:0007669"/>
    <property type="project" value="InterPro"/>
</dbReference>
<dbReference type="CDD" id="cd16444">
    <property type="entry name" value="LipB"/>
    <property type="match status" value="1"/>
</dbReference>
<dbReference type="FunFam" id="3.30.930.10:FF:000020">
    <property type="entry name" value="Octanoyltransferase"/>
    <property type="match status" value="1"/>
</dbReference>
<dbReference type="Gene3D" id="3.30.930.10">
    <property type="entry name" value="Bira Bifunctional Protein, Domain 2"/>
    <property type="match status" value="1"/>
</dbReference>
<dbReference type="HAMAP" id="MF_00013">
    <property type="entry name" value="LipB"/>
    <property type="match status" value="1"/>
</dbReference>
<dbReference type="InterPro" id="IPR045864">
    <property type="entry name" value="aa-tRNA-synth_II/BPL/LPL"/>
</dbReference>
<dbReference type="InterPro" id="IPR004143">
    <property type="entry name" value="BPL_LPL_catalytic"/>
</dbReference>
<dbReference type="InterPro" id="IPR000544">
    <property type="entry name" value="Octanoyltransferase"/>
</dbReference>
<dbReference type="InterPro" id="IPR020605">
    <property type="entry name" value="Octanoyltransferase_CS"/>
</dbReference>
<dbReference type="NCBIfam" id="TIGR00214">
    <property type="entry name" value="lipB"/>
    <property type="match status" value="1"/>
</dbReference>
<dbReference type="NCBIfam" id="NF010922">
    <property type="entry name" value="PRK14342.1"/>
    <property type="match status" value="1"/>
</dbReference>
<dbReference type="PANTHER" id="PTHR10993:SF7">
    <property type="entry name" value="LIPOYLTRANSFERASE 2, MITOCHONDRIAL-RELATED"/>
    <property type="match status" value="1"/>
</dbReference>
<dbReference type="PANTHER" id="PTHR10993">
    <property type="entry name" value="OCTANOYLTRANSFERASE"/>
    <property type="match status" value="1"/>
</dbReference>
<dbReference type="Pfam" id="PF21948">
    <property type="entry name" value="LplA-B_cat"/>
    <property type="match status" value="1"/>
</dbReference>
<dbReference type="PIRSF" id="PIRSF016262">
    <property type="entry name" value="LPLase"/>
    <property type="match status" value="1"/>
</dbReference>
<dbReference type="SUPFAM" id="SSF55681">
    <property type="entry name" value="Class II aaRS and biotin synthetases"/>
    <property type="match status" value="1"/>
</dbReference>
<dbReference type="PROSITE" id="PS51733">
    <property type="entry name" value="BPL_LPL_CATALYTIC"/>
    <property type="match status" value="1"/>
</dbReference>
<dbReference type="PROSITE" id="PS01313">
    <property type="entry name" value="LIPB"/>
    <property type="match status" value="1"/>
</dbReference>
<proteinExistence type="inferred from homology"/>
<feature type="chain" id="PRO_0000062820" description="Octanoyltransferase">
    <location>
        <begin position="1"/>
        <end position="211"/>
    </location>
</feature>
<feature type="domain" description="BPL/LPL catalytic" evidence="2">
    <location>
        <begin position="32"/>
        <end position="207"/>
    </location>
</feature>
<feature type="active site" description="Acyl-thioester intermediate" evidence="1">
    <location>
        <position position="169"/>
    </location>
</feature>
<feature type="binding site" evidence="1">
    <location>
        <begin position="71"/>
        <end position="78"/>
    </location>
    <ligand>
        <name>substrate</name>
    </ligand>
</feature>
<feature type="binding site" evidence="1">
    <location>
        <begin position="138"/>
        <end position="140"/>
    </location>
    <ligand>
        <name>substrate</name>
    </ligand>
</feature>
<feature type="binding site" evidence="1">
    <location>
        <begin position="151"/>
        <end position="153"/>
    </location>
    <ligand>
        <name>substrate</name>
    </ligand>
</feature>
<feature type="site" description="Lowers pKa of active site Cys" evidence="1">
    <location>
        <position position="135"/>
    </location>
</feature>